<reference key="1">
    <citation type="journal article" date="2002" name="Proc. Natl. Acad. Sci. U.S.A.">
        <title>Genome sequence and comparative microarray analysis of serotype M18 group A Streptococcus strains associated with acute rheumatic fever outbreaks.</title>
        <authorList>
            <person name="Smoot J.C."/>
            <person name="Barbian K.D."/>
            <person name="Van Gompel J.J."/>
            <person name="Smoot L.M."/>
            <person name="Chaussee M.S."/>
            <person name="Sylva G.L."/>
            <person name="Sturdevant D.E."/>
            <person name="Ricklefs S.M."/>
            <person name="Porcella S.F."/>
            <person name="Parkins L.D."/>
            <person name="Beres S.B."/>
            <person name="Campbell D.S."/>
            <person name="Smith T.M."/>
            <person name="Zhang Q."/>
            <person name="Kapur V."/>
            <person name="Daly J.A."/>
            <person name="Veasy L.G."/>
            <person name="Musser J.M."/>
        </authorList>
    </citation>
    <scope>NUCLEOTIDE SEQUENCE [LARGE SCALE GENOMIC DNA]</scope>
    <source>
        <strain>MGAS8232</strain>
    </source>
</reference>
<accession>P68777</accession>
<accession>P50467</accession>
<feature type="initiator methionine" description="Removed" evidence="1">
    <location>
        <position position="1"/>
    </location>
</feature>
<feature type="chain" id="PRO_0000145707" description="Glyceraldehyde-3-phosphate dehydrogenase">
    <location>
        <begin position="2"/>
        <end position="336"/>
    </location>
</feature>
<feature type="active site" description="Nucleophile" evidence="2">
    <location>
        <position position="152"/>
    </location>
</feature>
<feature type="binding site" evidence="2">
    <location>
        <begin position="12"/>
        <end position="13"/>
    </location>
    <ligand>
        <name>NAD(+)</name>
        <dbReference type="ChEBI" id="CHEBI:57540"/>
    </ligand>
</feature>
<feature type="binding site" evidence="2">
    <location>
        <position position="34"/>
    </location>
    <ligand>
        <name>NAD(+)</name>
        <dbReference type="ChEBI" id="CHEBI:57540"/>
    </ligand>
</feature>
<feature type="binding site" evidence="2">
    <location>
        <position position="78"/>
    </location>
    <ligand>
        <name>NAD(+)</name>
        <dbReference type="ChEBI" id="CHEBI:57540"/>
    </ligand>
</feature>
<feature type="binding site" evidence="2">
    <location>
        <position position="121"/>
    </location>
    <ligand>
        <name>NAD(+)</name>
        <dbReference type="ChEBI" id="CHEBI:57540"/>
    </ligand>
</feature>
<feature type="binding site" evidence="2">
    <location>
        <begin position="151"/>
        <end position="153"/>
    </location>
    <ligand>
        <name>D-glyceraldehyde 3-phosphate</name>
        <dbReference type="ChEBI" id="CHEBI:59776"/>
    </ligand>
</feature>
<feature type="binding site" evidence="2">
    <location>
        <position position="182"/>
    </location>
    <ligand>
        <name>D-glyceraldehyde 3-phosphate</name>
        <dbReference type="ChEBI" id="CHEBI:59776"/>
    </ligand>
</feature>
<feature type="binding site" evidence="2">
    <location>
        <position position="199"/>
    </location>
    <ligand>
        <name>D-glyceraldehyde 3-phosphate</name>
        <dbReference type="ChEBI" id="CHEBI:59776"/>
    </ligand>
</feature>
<feature type="binding site" evidence="2">
    <location>
        <begin position="212"/>
        <end position="213"/>
    </location>
    <ligand>
        <name>D-glyceraldehyde 3-phosphate</name>
        <dbReference type="ChEBI" id="CHEBI:59776"/>
    </ligand>
</feature>
<feature type="binding site" evidence="2">
    <location>
        <position position="235"/>
    </location>
    <ligand>
        <name>D-glyceraldehyde 3-phosphate</name>
        <dbReference type="ChEBI" id="CHEBI:59776"/>
    </ligand>
</feature>
<feature type="binding site" evidence="2">
    <location>
        <position position="316"/>
    </location>
    <ligand>
        <name>NAD(+)</name>
        <dbReference type="ChEBI" id="CHEBI:57540"/>
    </ligand>
</feature>
<feature type="site" description="Activates thiol group during catalysis" evidence="4">
    <location>
        <position position="179"/>
    </location>
</feature>
<feature type="strand" evidence="6">
    <location>
        <begin position="3"/>
        <end position="8"/>
    </location>
</feature>
<feature type="helix" evidence="6">
    <location>
        <begin position="12"/>
        <end position="21"/>
    </location>
</feature>
<feature type="strand" evidence="6">
    <location>
        <begin position="25"/>
        <end position="33"/>
    </location>
</feature>
<feature type="helix" evidence="6">
    <location>
        <begin position="38"/>
        <end position="46"/>
    </location>
</feature>
<feature type="turn" evidence="6">
    <location>
        <begin position="49"/>
        <end position="51"/>
    </location>
</feature>
<feature type="strand" evidence="6">
    <location>
        <begin position="58"/>
        <end position="61"/>
    </location>
</feature>
<feature type="strand" evidence="6">
    <location>
        <begin position="64"/>
        <end position="67"/>
    </location>
</feature>
<feature type="strand" evidence="6">
    <location>
        <begin position="70"/>
        <end position="75"/>
    </location>
</feature>
<feature type="helix" evidence="6">
    <location>
        <begin position="80"/>
        <end position="82"/>
    </location>
</feature>
<feature type="helix" evidence="6">
    <location>
        <begin position="85"/>
        <end position="88"/>
    </location>
</feature>
<feature type="strand" evidence="6">
    <location>
        <begin position="92"/>
        <end position="95"/>
    </location>
</feature>
<feature type="strand" evidence="6">
    <location>
        <begin position="97"/>
        <end position="99"/>
    </location>
</feature>
<feature type="helix" evidence="6">
    <location>
        <begin position="103"/>
        <end position="106"/>
    </location>
</feature>
<feature type="helix" evidence="6">
    <location>
        <begin position="107"/>
        <end position="109"/>
    </location>
</feature>
<feature type="strand" evidence="6">
    <location>
        <begin position="116"/>
        <end position="122"/>
    </location>
</feature>
<feature type="strand" evidence="6">
    <location>
        <begin position="128"/>
        <end position="130"/>
    </location>
</feature>
<feature type="turn" evidence="6">
    <location>
        <begin position="133"/>
        <end position="135"/>
    </location>
</feature>
<feature type="helix" evidence="6">
    <location>
        <begin position="137"/>
        <end position="139"/>
    </location>
</feature>
<feature type="strand" evidence="6">
    <location>
        <begin position="145"/>
        <end position="148"/>
    </location>
</feature>
<feature type="helix" evidence="6">
    <location>
        <begin position="152"/>
        <end position="168"/>
    </location>
</feature>
<feature type="strand" evidence="6">
    <location>
        <begin position="170"/>
        <end position="180"/>
    </location>
</feature>
<feature type="strand" evidence="6">
    <location>
        <begin position="187"/>
        <end position="189"/>
    </location>
</feature>
<feature type="turn" evidence="6">
    <location>
        <begin position="197"/>
        <end position="200"/>
    </location>
</feature>
<feature type="strand" evidence="6">
    <location>
        <begin position="208"/>
        <end position="211"/>
    </location>
</feature>
<feature type="helix" evidence="6">
    <location>
        <begin position="216"/>
        <end position="220"/>
    </location>
</feature>
<feature type="helix" evidence="6">
    <location>
        <begin position="223"/>
        <end position="225"/>
    </location>
</feature>
<feature type="turn" evidence="6">
    <location>
        <begin position="226"/>
        <end position="228"/>
    </location>
</feature>
<feature type="strand" evidence="6">
    <location>
        <begin position="229"/>
        <end position="237"/>
    </location>
</feature>
<feature type="strand" evidence="6">
    <location>
        <begin position="242"/>
        <end position="252"/>
    </location>
</feature>
<feature type="helix" evidence="6">
    <location>
        <begin position="256"/>
        <end position="265"/>
    </location>
</feature>
<feature type="strand" evidence="6">
    <location>
        <begin position="268"/>
        <end position="274"/>
    </location>
</feature>
<feature type="helix" evidence="6">
    <location>
        <begin position="280"/>
        <end position="283"/>
    </location>
</feature>
<feature type="strand" evidence="6">
    <location>
        <begin position="289"/>
        <end position="293"/>
    </location>
</feature>
<feature type="helix" evidence="6">
    <location>
        <begin position="294"/>
        <end position="296"/>
    </location>
</feature>
<feature type="strand" evidence="6">
    <location>
        <begin position="298"/>
        <end position="302"/>
    </location>
</feature>
<feature type="strand" evidence="6">
    <location>
        <begin position="305"/>
        <end position="314"/>
    </location>
</feature>
<feature type="helix" evidence="6">
    <location>
        <begin position="318"/>
        <end position="334"/>
    </location>
</feature>
<gene>
    <name type="primary">gap</name>
    <name type="synonym">gapA</name>
    <name type="synonym">plr</name>
    <name type="ordered locus">spyM18_0261</name>
</gene>
<dbReference type="EC" id="1.2.1.12" evidence="3"/>
<dbReference type="EMBL" id="AE009949">
    <property type="protein sequence ID" value="AAL97041.1"/>
    <property type="molecule type" value="Genomic_DNA"/>
</dbReference>
<dbReference type="RefSeq" id="WP_002986042.1">
    <property type="nucleotide sequence ID" value="NC_003485.1"/>
</dbReference>
<dbReference type="PDB" id="6FZH">
    <property type="method" value="X-ray"/>
    <property type="resolution" value="1.50 A"/>
    <property type="chains" value="A/B=1-336"/>
</dbReference>
<dbReference type="PDBsum" id="6FZH"/>
<dbReference type="SMR" id="P68777"/>
<dbReference type="MoonProt" id="P68777"/>
<dbReference type="KEGG" id="spm:spyM18_0261"/>
<dbReference type="HOGENOM" id="CLU_030140_0_3_9"/>
<dbReference type="UniPathway" id="UPA00109">
    <property type="reaction ID" value="UER00184"/>
</dbReference>
<dbReference type="GO" id="GO:0005737">
    <property type="term" value="C:cytoplasm"/>
    <property type="evidence" value="ECO:0007669"/>
    <property type="project" value="UniProtKB-SubCell"/>
</dbReference>
<dbReference type="GO" id="GO:0004365">
    <property type="term" value="F:glyceraldehyde-3-phosphate dehydrogenase (NAD+) (phosphorylating) activity"/>
    <property type="evidence" value="ECO:0000250"/>
    <property type="project" value="UniProtKB"/>
</dbReference>
<dbReference type="GO" id="GO:0051287">
    <property type="term" value="F:NAD binding"/>
    <property type="evidence" value="ECO:0000250"/>
    <property type="project" value="UniProtKB"/>
</dbReference>
<dbReference type="GO" id="GO:0050661">
    <property type="term" value="F:NADP binding"/>
    <property type="evidence" value="ECO:0007669"/>
    <property type="project" value="InterPro"/>
</dbReference>
<dbReference type="GO" id="GO:0006006">
    <property type="term" value="P:glucose metabolic process"/>
    <property type="evidence" value="ECO:0007669"/>
    <property type="project" value="InterPro"/>
</dbReference>
<dbReference type="GO" id="GO:0006096">
    <property type="term" value="P:glycolytic process"/>
    <property type="evidence" value="ECO:0007669"/>
    <property type="project" value="UniProtKB-UniPathway"/>
</dbReference>
<dbReference type="CDD" id="cd18126">
    <property type="entry name" value="GAPDH_I_C"/>
    <property type="match status" value="1"/>
</dbReference>
<dbReference type="CDD" id="cd05214">
    <property type="entry name" value="GAPDH_I_N"/>
    <property type="match status" value="1"/>
</dbReference>
<dbReference type="FunFam" id="3.30.360.10:FF:000002">
    <property type="entry name" value="Glyceraldehyde-3-phosphate dehydrogenase"/>
    <property type="match status" value="1"/>
</dbReference>
<dbReference type="FunFam" id="3.40.50.720:FF:000001">
    <property type="entry name" value="Glyceraldehyde-3-phosphate dehydrogenase"/>
    <property type="match status" value="1"/>
</dbReference>
<dbReference type="Gene3D" id="3.30.360.10">
    <property type="entry name" value="Dihydrodipicolinate Reductase, domain 2"/>
    <property type="match status" value="1"/>
</dbReference>
<dbReference type="Gene3D" id="3.40.50.720">
    <property type="entry name" value="NAD(P)-binding Rossmann-like Domain"/>
    <property type="match status" value="1"/>
</dbReference>
<dbReference type="InterPro" id="IPR020831">
    <property type="entry name" value="GlycerAld/Erythrose_P_DH"/>
</dbReference>
<dbReference type="InterPro" id="IPR020830">
    <property type="entry name" value="GlycerAld_3-P_DH_AS"/>
</dbReference>
<dbReference type="InterPro" id="IPR020829">
    <property type="entry name" value="GlycerAld_3-P_DH_cat"/>
</dbReference>
<dbReference type="InterPro" id="IPR020828">
    <property type="entry name" value="GlycerAld_3-P_DH_NAD(P)-bd"/>
</dbReference>
<dbReference type="InterPro" id="IPR006424">
    <property type="entry name" value="Glyceraldehyde-3-P_DH_1"/>
</dbReference>
<dbReference type="InterPro" id="IPR036291">
    <property type="entry name" value="NAD(P)-bd_dom_sf"/>
</dbReference>
<dbReference type="NCBIfam" id="TIGR01534">
    <property type="entry name" value="GAPDH-I"/>
    <property type="match status" value="1"/>
</dbReference>
<dbReference type="PANTHER" id="PTHR43148">
    <property type="entry name" value="GLYCERALDEHYDE-3-PHOSPHATE DEHYDROGENASE 2"/>
    <property type="match status" value="1"/>
</dbReference>
<dbReference type="Pfam" id="PF02800">
    <property type="entry name" value="Gp_dh_C"/>
    <property type="match status" value="1"/>
</dbReference>
<dbReference type="Pfam" id="PF00044">
    <property type="entry name" value="Gp_dh_N"/>
    <property type="match status" value="1"/>
</dbReference>
<dbReference type="PIRSF" id="PIRSF000149">
    <property type="entry name" value="GAP_DH"/>
    <property type="match status" value="1"/>
</dbReference>
<dbReference type="PRINTS" id="PR00078">
    <property type="entry name" value="G3PDHDRGNASE"/>
</dbReference>
<dbReference type="SMART" id="SM00846">
    <property type="entry name" value="Gp_dh_N"/>
    <property type="match status" value="1"/>
</dbReference>
<dbReference type="SUPFAM" id="SSF55347">
    <property type="entry name" value="Glyceraldehyde-3-phosphate dehydrogenase-like, C-terminal domain"/>
    <property type="match status" value="1"/>
</dbReference>
<dbReference type="SUPFAM" id="SSF51735">
    <property type="entry name" value="NAD(P)-binding Rossmann-fold domains"/>
    <property type="match status" value="1"/>
</dbReference>
<dbReference type="PROSITE" id="PS00071">
    <property type="entry name" value="GAPDH"/>
    <property type="match status" value="1"/>
</dbReference>
<protein>
    <recommendedName>
        <fullName evidence="2">Glyceraldehyde-3-phosphate dehydrogenase</fullName>
        <shortName evidence="2">GAPDH</shortName>
        <ecNumber evidence="3">1.2.1.12</ecNumber>
    </recommendedName>
    <alternativeName>
        <fullName evidence="2">NAD-dependent glyceraldehyde-3-phosphate dehydrogenase</fullName>
    </alternativeName>
</protein>
<keyword id="KW-0002">3D-structure</keyword>
<keyword id="KW-0963">Cytoplasm</keyword>
<keyword id="KW-0324">Glycolysis</keyword>
<keyword id="KW-0520">NAD</keyword>
<keyword id="KW-0547">Nucleotide-binding</keyword>
<keyword id="KW-0560">Oxidoreductase</keyword>
<comment type="function">
    <text evidence="2">Catalyzes the oxidative phosphorylation of glyceraldehyde 3-phosphate (G3P) to 1,3-bisphosphoglycerate (BPG) using the cofactor NAD. The first reaction step involves the formation of a hemiacetal intermediate between G3P and a cysteine residue, and this hemiacetal intermediate is then oxidized to a thioester, with concomitant reduction of NAD to NADH. The reduced NADH is then exchanged with the second NAD, and the thioester is attacked by a nucleophilic inorganic phosphate to produce BPG.</text>
</comment>
<comment type="catalytic activity">
    <reaction evidence="3">
        <text>D-glyceraldehyde 3-phosphate + phosphate + NAD(+) = (2R)-3-phospho-glyceroyl phosphate + NADH + H(+)</text>
        <dbReference type="Rhea" id="RHEA:10300"/>
        <dbReference type="ChEBI" id="CHEBI:15378"/>
        <dbReference type="ChEBI" id="CHEBI:43474"/>
        <dbReference type="ChEBI" id="CHEBI:57540"/>
        <dbReference type="ChEBI" id="CHEBI:57604"/>
        <dbReference type="ChEBI" id="CHEBI:57945"/>
        <dbReference type="ChEBI" id="CHEBI:59776"/>
        <dbReference type="EC" id="1.2.1.12"/>
    </reaction>
</comment>
<comment type="pathway">
    <text evidence="5">Carbohydrate degradation; glycolysis; pyruvate from D-glyceraldehyde 3-phosphate: step 1/5.</text>
</comment>
<comment type="subunit">
    <text evidence="2">Homotetramer.</text>
</comment>
<comment type="subcellular location">
    <subcellularLocation>
        <location evidence="5">Cytoplasm</location>
    </subcellularLocation>
</comment>
<comment type="similarity">
    <text evidence="5">Belongs to the glyceraldehyde-3-phosphate dehydrogenase family.</text>
</comment>
<proteinExistence type="evidence at protein level"/>
<name>G3P_STRP8</name>
<evidence type="ECO:0000250" key="1"/>
<evidence type="ECO:0000250" key="2">
    <source>
        <dbReference type="UniProtKB" id="P00362"/>
    </source>
</evidence>
<evidence type="ECO:0000250" key="3">
    <source>
        <dbReference type="UniProtKB" id="P09124"/>
    </source>
</evidence>
<evidence type="ECO:0000250" key="4">
    <source>
        <dbReference type="UniProtKB" id="Q6GIL8"/>
    </source>
</evidence>
<evidence type="ECO:0000305" key="5"/>
<evidence type="ECO:0007829" key="6">
    <source>
        <dbReference type="PDB" id="6FZH"/>
    </source>
</evidence>
<organism>
    <name type="scientific">Streptococcus pyogenes serotype M18 (strain MGAS8232)</name>
    <dbReference type="NCBI Taxonomy" id="186103"/>
    <lineage>
        <taxon>Bacteria</taxon>
        <taxon>Bacillati</taxon>
        <taxon>Bacillota</taxon>
        <taxon>Bacilli</taxon>
        <taxon>Lactobacillales</taxon>
        <taxon>Streptococcaceae</taxon>
        <taxon>Streptococcus</taxon>
    </lineage>
</organism>
<sequence length="336" mass="35943">MVVKVGINGFGRIGRLAFRRIQNIEGVEVTRINDLTDPNMLAHLLKYDTTQGRFDGTVEVKEGGFEVNGNFIKVSAERDPENIDWATDGVEIVLEATGFFAKKEAAEKHLHANGAKKVVITAPGGNDVKTVVFNTNHDILDGTETVISGASCTTNCLAPMAKALHDAFGIQKGLMTTIHAYTGDQMILDGPHRGGDLRRARAGAANIVPNSTGAAKAIGLVIPELNGKLDGAAQRVPVPTGSVTELVVTLDKNVSVDEINAAMKAASNDSFGYTEDPIVSSDIVGVSYGSLFDATQTKVMEVDGSQLVKVVSWYDNEMSYTAQLVRTLEYFAKIAK</sequence>